<protein>
    <recommendedName>
        <fullName evidence="1">Large ribosomal subunit protein uL1</fullName>
    </recommendedName>
    <alternativeName>
        <fullName evidence="2">50S ribosomal protein L1</fullName>
    </alternativeName>
</protein>
<accession>Q1J834</accession>
<dbReference type="EMBL" id="CP000262">
    <property type="protein sequence ID" value="ABF37327.1"/>
    <property type="molecule type" value="Genomic_DNA"/>
</dbReference>
<dbReference type="SMR" id="Q1J834"/>
<dbReference type="KEGG" id="spi:MGAS10750_Spy0377"/>
<dbReference type="HOGENOM" id="CLU_062853_0_0_9"/>
<dbReference type="Proteomes" id="UP000002434">
    <property type="component" value="Chromosome"/>
</dbReference>
<dbReference type="GO" id="GO:0015934">
    <property type="term" value="C:large ribosomal subunit"/>
    <property type="evidence" value="ECO:0007669"/>
    <property type="project" value="InterPro"/>
</dbReference>
<dbReference type="GO" id="GO:0019843">
    <property type="term" value="F:rRNA binding"/>
    <property type="evidence" value="ECO:0007669"/>
    <property type="project" value="UniProtKB-UniRule"/>
</dbReference>
<dbReference type="GO" id="GO:0003735">
    <property type="term" value="F:structural constituent of ribosome"/>
    <property type="evidence" value="ECO:0007669"/>
    <property type="project" value="InterPro"/>
</dbReference>
<dbReference type="GO" id="GO:0000049">
    <property type="term" value="F:tRNA binding"/>
    <property type="evidence" value="ECO:0007669"/>
    <property type="project" value="UniProtKB-KW"/>
</dbReference>
<dbReference type="GO" id="GO:0006417">
    <property type="term" value="P:regulation of translation"/>
    <property type="evidence" value="ECO:0007669"/>
    <property type="project" value="UniProtKB-KW"/>
</dbReference>
<dbReference type="GO" id="GO:0006412">
    <property type="term" value="P:translation"/>
    <property type="evidence" value="ECO:0007669"/>
    <property type="project" value="UniProtKB-UniRule"/>
</dbReference>
<dbReference type="CDD" id="cd00403">
    <property type="entry name" value="Ribosomal_L1"/>
    <property type="match status" value="1"/>
</dbReference>
<dbReference type="FunFam" id="3.40.50.790:FF:000001">
    <property type="entry name" value="50S ribosomal protein L1"/>
    <property type="match status" value="1"/>
</dbReference>
<dbReference type="Gene3D" id="3.30.190.20">
    <property type="match status" value="1"/>
</dbReference>
<dbReference type="Gene3D" id="3.40.50.790">
    <property type="match status" value="1"/>
</dbReference>
<dbReference type="HAMAP" id="MF_01318_B">
    <property type="entry name" value="Ribosomal_uL1_B"/>
    <property type="match status" value="1"/>
</dbReference>
<dbReference type="InterPro" id="IPR005878">
    <property type="entry name" value="Ribosom_uL1_bac-type"/>
</dbReference>
<dbReference type="InterPro" id="IPR002143">
    <property type="entry name" value="Ribosomal_uL1"/>
</dbReference>
<dbReference type="InterPro" id="IPR023674">
    <property type="entry name" value="Ribosomal_uL1-like"/>
</dbReference>
<dbReference type="InterPro" id="IPR028364">
    <property type="entry name" value="Ribosomal_uL1/biogenesis"/>
</dbReference>
<dbReference type="InterPro" id="IPR016095">
    <property type="entry name" value="Ribosomal_uL1_3-a/b-sand"/>
</dbReference>
<dbReference type="InterPro" id="IPR023673">
    <property type="entry name" value="Ribosomal_uL1_CS"/>
</dbReference>
<dbReference type="NCBIfam" id="TIGR01169">
    <property type="entry name" value="rplA_bact"/>
    <property type="match status" value="1"/>
</dbReference>
<dbReference type="PANTHER" id="PTHR36427">
    <property type="entry name" value="54S RIBOSOMAL PROTEIN L1, MITOCHONDRIAL"/>
    <property type="match status" value="1"/>
</dbReference>
<dbReference type="PANTHER" id="PTHR36427:SF3">
    <property type="entry name" value="LARGE RIBOSOMAL SUBUNIT PROTEIN UL1M"/>
    <property type="match status" value="1"/>
</dbReference>
<dbReference type="Pfam" id="PF00687">
    <property type="entry name" value="Ribosomal_L1"/>
    <property type="match status" value="1"/>
</dbReference>
<dbReference type="PIRSF" id="PIRSF002155">
    <property type="entry name" value="Ribosomal_L1"/>
    <property type="match status" value="1"/>
</dbReference>
<dbReference type="SUPFAM" id="SSF56808">
    <property type="entry name" value="Ribosomal protein L1"/>
    <property type="match status" value="1"/>
</dbReference>
<dbReference type="PROSITE" id="PS01199">
    <property type="entry name" value="RIBOSOMAL_L1"/>
    <property type="match status" value="1"/>
</dbReference>
<reference key="1">
    <citation type="journal article" date="2006" name="Proc. Natl. Acad. Sci. U.S.A.">
        <title>Molecular genetic anatomy of inter- and intraserotype variation in the human bacterial pathogen group A Streptococcus.</title>
        <authorList>
            <person name="Beres S.B."/>
            <person name="Richter E.W."/>
            <person name="Nagiec M.J."/>
            <person name="Sumby P."/>
            <person name="Porcella S.F."/>
            <person name="DeLeo F.R."/>
            <person name="Musser J.M."/>
        </authorList>
    </citation>
    <scope>NUCLEOTIDE SEQUENCE [LARGE SCALE GENOMIC DNA]</scope>
    <source>
        <strain>MGAS10750</strain>
    </source>
</reference>
<evidence type="ECO:0000255" key="1">
    <source>
        <dbReference type="HAMAP-Rule" id="MF_01318"/>
    </source>
</evidence>
<evidence type="ECO:0000305" key="2"/>
<name>RL1_STRPF</name>
<keyword id="KW-0678">Repressor</keyword>
<keyword id="KW-0687">Ribonucleoprotein</keyword>
<keyword id="KW-0689">Ribosomal protein</keyword>
<keyword id="KW-0694">RNA-binding</keyword>
<keyword id="KW-0699">rRNA-binding</keyword>
<keyword id="KW-0810">Translation regulation</keyword>
<keyword id="KW-0820">tRNA-binding</keyword>
<gene>
    <name evidence="1" type="primary">rplA</name>
    <name type="ordered locus">MGAS10750_Spy0377</name>
</gene>
<comment type="function">
    <text evidence="1">Binds directly to 23S rRNA. The L1 stalk is quite mobile in the ribosome, and is involved in E site tRNA release.</text>
</comment>
<comment type="function">
    <text evidence="1">Protein L1 is also a translational repressor protein, it controls the translation of the L11 operon by binding to its mRNA.</text>
</comment>
<comment type="subunit">
    <text evidence="1">Part of the 50S ribosomal subunit.</text>
</comment>
<comment type="similarity">
    <text evidence="1">Belongs to the universal ribosomal protein uL1 family.</text>
</comment>
<feature type="chain" id="PRO_0000308117" description="Large ribosomal subunit protein uL1">
    <location>
        <begin position="1"/>
        <end position="229"/>
    </location>
</feature>
<organism>
    <name type="scientific">Streptococcus pyogenes serotype M4 (strain MGAS10750)</name>
    <dbReference type="NCBI Taxonomy" id="370554"/>
    <lineage>
        <taxon>Bacteria</taxon>
        <taxon>Bacillati</taxon>
        <taxon>Bacillota</taxon>
        <taxon>Bacilli</taxon>
        <taxon>Lactobacillales</taxon>
        <taxon>Streptococcaceae</taxon>
        <taxon>Streptococcus</taxon>
    </lineage>
</organism>
<proteinExistence type="inferred from homology"/>
<sequence length="229" mass="24394">MAKKSKQMRAALEKVDSTKAYSVEEAVALVKETNFAKFDASVEVAYNLNIDVRKADQQIRGAMVLPNGTGKTQRVLVFARGAKAEEAKAAGADFVGEDDLVAKINGGWLDFDVVIATPDMMAIVGRLGRVLGPRNLMPNPKTGTVTMDVAKAVEESKGGKITYRADKAGNVQALIGKVSFDADKLVENFKAFHDVMAKAKPATAKGTYMANVSITSTQGVGIKVDPNSL</sequence>